<keyword id="KW-0002">3D-structure</keyword>
<keyword id="KW-0123">Cardiotoxin</keyword>
<keyword id="KW-0903">Direct protein sequencing</keyword>
<keyword id="KW-1015">Disulfide bond</keyword>
<keyword id="KW-0872">Ion channel impairing toxin</keyword>
<keyword id="KW-0166">Nematocyst</keyword>
<keyword id="KW-0528">Neurotoxin</keyword>
<keyword id="KW-0964">Secreted</keyword>
<keyword id="KW-0800">Toxin</keyword>
<keyword id="KW-0738">Voltage-gated sodium channel impairing toxin</keyword>
<organism>
    <name type="scientific">Anthopleura xanthogrammica</name>
    <name type="common">Giant green sea anemone</name>
    <name type="synonym">Actinia xanthogrammica</name>
    <dbReference type="NCBI Taxonomy" id="6112"/>
    <lineage>
        <taxon>Eukaryota</taxon>
        <taxon>Metazoa</taxon>
        <taxon>Cnidaria</taxon>
        <taxon>Anthozoa</taxon>
        <taxon>Hexacorallia</taxon>
        <taxon>Actiniaria</taxon>
        <taxon>Actiniidae</taxon>
        <taxon>Anthopleura</taxon>
    </lineage>
</organism>
<accession>P01530</accession>
<accession>P0C5G4</accession>
<evidence type="ECO:0000250" key="1">
    <source>
        <dbReference type="UniProtKB" id="P01531"/>
    </source>
</evidence>
<evidence type="ECO:0000269" key="2">
    <source>
    </source>
</evidence>
<evidence type="ECO:0000269" key="3">
    <source>
    </source>
</evidence>
<evidence type="ECO:0000269" key="4">
    <source>
    </source>
</evidence>
<evidence type="ECO:0000269" key="5">
    <source>
    </source>
</evidence>
<evidence type="ECO:0000269" key="6">
    <source>
    </source>
</evidence>
<evidence type="ECO:0000269" key="7">
    <source>
    </source>
</evidence>
<evidence type="ECO:0000269" key="8">
    <source>
    </source>
</evidence>
<evidence type="ECO:0000269" key="9">
    <source>
    </source>
</evidence>
<evidence type="ECO:0000269" key="10">
    <source>
    </source>
</evidence>
<evidence type="ECO:0000269" key="11">
    <source>
    </source>
</evidence>
<evidence type="ECO:0000303" key="12">
    <source>
    </source>
</evidence>
<evidence type="ECO:0000303" key="13">
    <source>
    </source>
</evidence>
<evidence type="ECO:0000303" key="14">
    <source>
    </source>
</evidence>
<evidence type="ECO:0000305" key="15"/>
<evidence type="ECO:0007829" key="16">
    <source>
        <dbReference type="PDB" id="1AHL"/>
    </source>
</evidence>
<proteinExistence type="evidence at protein level"/>
<reference key="1">
    <citation type="journal article" date="1998" name="Toxicon">
        <title>Identification and characterization of novel sodium channel toxins from the sea anemone Anthopleura xanthogrammica.</title>
        <authorList>
            <person name="Kelso G.J."/>
            <person name="Blumenthal K.M."/>
        </authorList>
    </citation>
    <scope>NUCLEOTIDE SEQUENCE [MRNA]</scope>
    <source>
        <tissue>Tentacle</tissue>
    </source>
</reference>
<reference key="2">
    <citation type="journal article" date="1977" name="Biochemistry">
        <title>Amino acid sequence of the Anthopleura xanthogrammica heart stimulant, anthopleurin A.</title>
        <authorList>
            <person name="Tanaka M."/>
            <person name="Haniu M."/>
            <person name="Yasunobu K.T."/>
            <person name="Norton T.R."/>
        </authorList>
    </citation>
    <scope>PROTEIN SEQUENCE</scope>
    <scope>FUNCTION</scope>
</reference>
<reference key="3">
    <citation type="journal article" date="1981" name="Fed. Proc.">
        <title>Cardiotonic polypeptides from Anthopleura xanthogrammica (Brandt) and A. elegantissima (Brandt).</title>
        <authorList>
            <person name="Norton T.R."/>
        </authorList>
    </citation>
    <scope>DISULFIDE BONDS</scope>
</reference>
<reference key="4">
    <citation type="journal article" date="1994" name="J. Biol. Chem.">
        <title>Importance of the unique cationic residues arginine 12 and lysine 49 in the activity of the cardiotonic polypeptide anthopleurin B.</title>
        <authorList>
            <person name="Gallagher M.J."/>
            <person name="Blumenthal K.M."/>
        </authorList>
    </citation>
    <scope>SITE SER-12 AND GLN-49</scope>
</reference>
<reference key="5">
    <citation type="journal article" date="1995" name="Biochemistry">
        <title>Multiple cationic residues of anthopleurin B that determine high affinity and channel isoform discrimination.</title>
        <authorList>
            <person name="Khera P.K."/>
            <person name="Benzinger G.R."/>
            <person name="Lipkind G."/>
            <person name="Drum C.L."/>
            <person name="Hanck D.A."/>
            <person name="Blumenthal K.M."/>
        </authorList>
    </citation>
    <scope>FUNCTION</scope>
    <scope>SITE SER-12 AND GLN-49</scope>
</reference>
<reference key="6">
    <citation type="journal article" date="1995" name="J. Gen. Physiol.">
        <title>Modification of inactivation in cardiac sodium channels: ionic current studies with Anthopleurin-A toxin.</title>
        <authorList>
            <person name="Hanck D.A."/>
            <person name="Sheets M.F."/>
        </authorList>
    </citation>
    <scope>FUNCTION ON OPEN-STATE SODIUM CHANNELS</scope>
</reference>
<reference key="7">
    <citation type="journal article" date="1997" name="Pflugers Arch.">
        <title>Differences in the binding sites of two site-3 sodium channel toxins.</title>
        <authorList>
            <person name="Benzinger G.R."/>
            <person name="Drum C.L."/>
            <person name="Chen L.Q."/>
            <person name="Kallen R.G."/>
            <person name="Hanck D.A."/>
            <person name="Hanck D."/>
        </authorList>
    </citation>
    <scope>FUNCTION ON CHANNEL DOMAIN 4</scope>
</reference>
<reference key="8">
    <citation type="journal article" date="2011" name="Channels">
        <title>Open- and closed-state fast inactivation in sodium channels: differential effects of a site-3 anemone toxin.</title>
        <authorList>
            <person name="Groome J."/>
            <person name="Lehmann-Horn F."/>
            <person name="Holzherr B."/>
        </authorList>
    </citation>
    <scope>FUNCTION ON FAST INACTIVATION</scope>
</reference>
<reference key="9">
    <citation type="journal article" date="2007" name="Toxicon">
        <title>Site-3 toxins and cardiac sodium channels.</title>
        <authorList>
            <person name="Hanck D.A."/>
            <person name="Sheets M.F."/>
        </authorList>
    </citation>
    <scope>REVIEW</scope>
</reference>
<reference key="10">
    <citation type="journal article" date="2012" name="Toxicon">
        <title>Development of a rational nomenclature for naming peptide and protein toxins from sea anemones.</title>
        <authorList>
            <person name="Oliveira J.S."/>
            <person name="Fuentes-Silva D."/>
            <person name="King G.F."/>
        </authorList>
    </citation>
    <scope>NOMENCLATURE</scope>
</reference>
<reference key="11">
    <citation type="journal article" date="1990" name="Eur. J. Biochem.">
        <title>Sequential 1H-NMR assignments and secondary structure of the sea anemone polypeptide anthopleurin-A.</title>
        <authorList>
            <person name="Mabbut B.C."/>
            <person name="Norton R.S."/>
        </authorList>
    </citation>
    <scope>STRUCTURE BY NMR</scope>
    <scope>DISULFIDE BONDS</scope>
</reference>
<reference key="12">
    <citation type="journal article" date="1995" name="Biochemistry">
        <title>Three-dimensional structure in solution of the polypeptide cardiac stimulant anthopleurin-A.</title>
        <authorList>
            <person name="Pallaghy P.K."/>
            <person name="Scanlon M.J."/>
            <person name="Monks S.A."/>
            <person name="Norton R.S."/>
        </authorList>
    </citation>
    <scope>STRUCTURE BY NMR</scope>
    <scope>DISULFIDE BONDS</scope>
</reference>
<comment type="function">
    <text evidence="1 2 3 5 10 11">Binds specifically to voltage-gated sodium channels (Nav) (site 3), thereby delaying their inactivation. This toxin retains the greatest capacity to discriminate between the cardiac (Nav1.5/SCN5A) and neuronal sodium channels (2.5 nM versus 120 nM, when electrophysiologically tested and 14 nM versus 400 nM, when tested by ion flux), whereas its paralog Anthopleurin-B has the highest affinity of all anemone toxins for the mammalian sodium channel (PubMed:13806, PubMed:17092528, PubMed:7612595). Its ability to differentiate between cardiac and skeletal channels appears to be associated with domain 4 of the channel (PubMed:9306007). This toxin does not slow or inhibit closed-state inactivation of cardiac sodium channels, but selectively modifies inactivation from the open-state (PubMed:8576699). It does not display phospholipid-binding activities, suggesting that the domain IV S3-S4 linker is located at the extracellular surface and not buried in the phospholipid bilayer (By similarity).</text>
</comment>
<comment type="subcellular location">
    <subcellularLocation>
        <location evidence="15">Secreted</location>
    </subcellularLocation>
    <subcellularLocation>
        <location evidence="15">Nematocyst</location>
    </subcellularLocation>
</comment>
<comment type="similarity">
    <text evidence="15">Belongs to the sea anemone sodium channel inhibitory toxin family. Type I subfamily.</text>
</comment>
<comment type="online information" name="Wikipedia">
    <link uri="https://en.wikipedia.org/wiki/Anthopleurin"/>
</comment>
<feature type="chain" id="PRO_0000221515" description="Delta-actitoxin-Axm1a" evidence="2">
    <location>
        <begin position="1"/>
        <end position="49"/>
    </location>
</feature>
<feature type="site" description="Key residue for high affinity and preferential inhibition of sodium cardiac channels versus neuronal channels" evidence="7 9">
    <location>
        <position position="12"/>
    </location>
</feature>
<feature type="site" description="Key residue for high affinity and preferential inhibition of sodium cardiac channels versus neuronal channels" evidence="7 9">
    <location>
        <position position="49"/>
    </location>
</feature>
<feature type="disulfide bond" evidence="4 6 8">
    <location>
        <begin position="4"/>
        <end position="46"/>
    </location>
</feature>
<feature type="disulfide bond" evidence="4 6 8">
    <location>
        <begin position="6"/>
        <end position="36"/>
    </location>
</feature>
<feature type="disulfide bond" evidence="4 6 8">
    <location>
        <begin position="29"/>
        <end position="47"/>
    </location>
</feature>
<feature type="strand" evidence="16">
    <location>
        <begin position="10"/>
        <end position="12"/>
    </location>
</feature>
<feature type="strand" evidence="16">
    <location>
        <begin position="20"/>
        <end position="23"/>
    </location>
</feature>
<feature type="strand" evidence="16">
    <location>
        <begin position="42"/>
        <end position="47"/>
    </location>
</feature>
<sequence length="49" mass="5138">GVSCLCDSDGPSVRGNTLSGTLWLYPSGCPSGWHNCKAHGPTIGWCCKQ</sequence>
<name>NA1A_ANTXA</name>
<dbReference type="PIR" id="A90401">
    <property type="entry name" value="NAXA"/>
</dbReference>
<dbReference type="PDB" id="1AHL">
    <property type="method" value="NMR"/>
    <property type="chains" value="A=1-49"/>
</dbReference>
<dbReference type="PDBsum" id="1AHL"/>
<dbReference type="BMRB" id="P01530"/>
<dbReference type="SMR" id="P01530"/>
<dbReference type="TCDB" id="8.B.17.1.3">
    <property type="family name" value="the sea anemone peptide toxin class iii (shi) family"/>
</dbReference>
<dbReference type="EvolutionaryTrace" id="P01530"/>
<dbReference type="GO" id="GO:0005576">
    <property type="term" value="C:extracellular region"/>
    <property type="evidence" value="ECO:0007669"/>
    <property type="project" value="UniProtKB-SubCell"/>
</dbReference>
<dbReference type="GO" id="GO:0042151">
    <property type="term" value="C:nematocyst"/>
    <property type="evidence" value="ECO:0007669"/>
    <property type="project" value="UniProtKB-SubCell"/>
</dbReference>
<dbReference type="GO" id="GO:0017080">
    <property type="term" value="F:sodium channel regulator activity"/>
    <property type="evidence" value="ECO:0007669"/>
    <property type="project" value="UniProtKB-KW"/>
</dbReference>
<dbReference type="GO" id="GO:0090729">
    <property type="term" value="F:toxin activity"/>
    <property type="evidence" value="ECO:0007669"/>
    <property type="project" value="UniProtKB-KW"/>
</dbReference>
<dbReference type="GO" id="GO:0009966">
    <property type="term" value="P:regulation of signal transduction"/>
    <property type="evidence" value="ECO:0007669"/>
    <property type="project" value="InterPro"/>
</dbReference>
<dbReference type="Gene3D" id="2.20.20.10">
    <property type="entry name" value="Anthopleurin-A"/>
    <property type="match status" value="1"/>
</dbReference>
<dbReference type="InterPro" id="IPR000693">
    <property type="entry name" value="Anenome_toxin"/>
</dbReference>
<dbReference type="InterPro" id="IPR023355">
    <property type="entry name" value="Myo_ane_neurotoxin_sf"/>
</dbReference>
<dbReference type="Pfam" id="PF00706">
    <property type="entry name" value="Toxin_4"/>
    <property type="match status" value="1"/>
</dbReference>
<dbReference type="PIRSF" id="PIRSF001905">
    <property type="entry name" value="Anenome_toxin"/>
    <property type="match status" value="1"/>
</dbReference>
<dbReference type="SUPFAM" id="SSF57392">
    <property type="entry name" value="Defensin-like"/>
    <property type="match status" value="1"/>
</dbReference>
<protein>
    <recommendedName>
        <fullName evidence="13">Delta-actitoxin-Axm1a</fullName>
        <shortName evidence="13">Delta-AITX-Axm1a</shortName>
    </recommendedName>
    <alternativeName>
        <fullName evidence="12">Anthopleurin-A</fullName>
        <shortName evidence="12">AP-A</shortName>
        <shortName evidence="15">ApA</shortName>
    </alternativeName>
    <alternativeName>
        <fullName evidence="14">PCR3-3,4</fullName>
    </alternativeName>
    <alternativeName>
        <fullName evidence="15">Toxin PCR7</fullName>
    </alternativeName>
</protein>